<sequence>MRISSVVEHRTPRVYVCYCLRSLSRPNQTYIGSTPDPIRRLRQHNGLVKQGAFYTRMARPWTMDVVVYGFPSKLAALQFEWSWQKPHASRHLRVMHDDGTRPNKSSATAAVYAGRSSKPLFPATRSSAPSSAASHDSGLNLRKKNRRVRMRSSTVPEYKFLVLRALLASEPFCFWHLHVGFYSEYAYGVWQFMDRANPTRYSVSRITRRPLPPSYPPVACDFRGVQGTNTPLAPPQDATAHTLRTSYPVLPEATTLSAAQKKKRSTSASCAPENEHMWAEEIPHARDAETLGLTWEQLEHAPTIARMEVPDGLMQASSAARGRSRRLRSHTSFLEALDQDASALEAHLVHASRKDMSSSICGLCGGHINRHVPLSYTHCPHACDAVFHLTCLARYSLEQETRAHARTFCLPTSAWCPMCQRPPVPWPEIVRRVFRRAELKVSM</sequence>
<proteinExistence type="inferred from homology"/>
<gene>
    <name evidence="1" type="primary">SLX1</name>
    <name type="ORF">MGL_1098</name>
</gene>
<reference key="1">
    <citation type="journal article" date="2007" name="Proc. Natl. Acad. Sci. U.S.A.">
        <title>Dandruff-associated Malassezia genomes reveal convergent and divergent virulence traits shared with plant and human fungal pathogens.</title>
        <authorList>
            <person name="Xu J."/>
            <person name="Saunders C.W."/>
            <person name="Hu P."/>
            <person name="Grant R.A."/>
            <person name="Boekhout T."/>
            <person name="Kuramae E.E."/>
            <person name="Kronstad J.W."/>
            <person name="DeAngelis Y.M."/>
            <person name="Reeder N.L."/>
            <person name="Johnstone K.R."/>
            <person name="Leland M."/>
            <person name="Fieno A.M."/>
            <person name="Begley W.M."/>
            <person name="Sun Y."/>
            <person name="Lacey M.P."/>
            <person name="Chaudhary T."/>
            <person name="Keough T."/>
            <person name="Chu L."/>
            <person name="Sears R."/>
            <person name="Yuan B."/>
            <person name="Dawson T.L. Jr."/>
        </authorList>
    </citation>
    <scope>NUCLEOTIDE SEQUENCE [LARGE SCALE GENOMIC DNA]</scope>
    <source>
        <strain>ATCC MYA-4612 / CBS 7966</strain>
    </source>
</reference>
<dbReference type="EC" id="3.1.-.-" evidence="1"/>
<dbReference type="EMBL" id="AAYY01000003">
    <property type="protein sequence ID" value="EDP44616.1"/>
    <property type="molecule type" value="Genomic_DNA"/>
</dbReference>
<dbReference type="RefSeq" id="XP_001731830.1">
    <property type="nucleotide sequence ID" value="XM_001731778.1"/>
</dbReference>
<dbReference type="STRING" id="425265.A8PWH1"/>
<dbReference type="GeneID" id="5856135"/>
<dbReference type="KEGG" id="mgl:MGL_1098"/>
<dbReference type="VEuPathDB" id="FungiDB:MGL_1098"/>
<dbReference type="InParanoid" id="A8PWH1"/>
<dbReference type="OMA" id="ACYFLRS"/>
<dbReference type="OrthoDB" id="24645at2759"/>
<dbReference type="Proteomes" id="UP000008837">
    <property type="component" value="Unassembled WGS sequence"/>
</dbReference>
<dbReference type="GO" id="GO:0033557">
    <property type="term" value="C:Slx1-Slx4 complex"/>
    <property type="evidence" value="ECO:0007669"/>
    <property type="project" value="UniProtKB-UniRule"/>
</dbReference>
<dbReference type="GO" id="GO:0017108">
    <property type="term" value="F:5'-flap endonuclease activity"/>
    <property type="evidence" value="ECO:0007669"/>
    <property type="project" value="InterPro"/>
</dbReference>
<dbReference type="GO" id="GO:0008821">
    <property type="term" value="F:crossover junction DNA endonuclease activity"/>
    <property type="evidence" value="ECO:0007669"/>
    <property type="project" value="TreeGrafter"/>
</dbReference>
<dbReference type="GO" id="GO:0008270">
    <property type="term" value="F:zinc ion binding"/>
    <property type="evidence" value="ECO:0007669"/>
    <property type="project" value="UniProtKB-KW"/>
</dbReference>
<dbReference type="GO" id="GO:0000724">
    <property type="term" value="P:double-strand break repair via homologous recombination"/>
    <property type="evidence" value="ECO:0007669"/>
    <property type="project" value="TreeGrafter"/>
</dbReference>
<dbReference type="CDD" id="cd10455">
    <property type="entry name" value="GIY-YIG_SLX1"/>
    <property type="match status" value="1"/>
</dbReference>
<dbReference type="Gene3D" id="3.40.1440.10">
    <property type="entry name" value="GIY-YIG endonuclease"/>
    <property type="match status" value="1"/>
</dbReference>
<dbReference type="Gene3D" id="3.30.40.10">
    <property type="entry name" value="Zinc/RING finger domain, C3HC4 (zinc finger)"/>
    <property type="match status" value="1"/>
</dbReference>
<dbReference type="HAMAP" id="MF_03100">
    <property type="entry name" value="Endonuc_su_Slx1"/>
    <property type="match status" value="1"/>
</dbReference>
<dbReference type="InterPro" id="IPR000305">
    <property type="entry name" value="GIY-YIG_endonuc"/>
</dbReference>
<dbReference type="InterPro" id="IPR035901">
    <property type="entry name" value="GIY-YIG_endonuc_sf"/>
</dbReference>
<dbReference type="InterPro" id="IPR027520">
    <property type="entry name" value="Slx1"/>
</dbReference>
<dbReference type="InterPro" id="IPR048749">
    <property type="entry name" value="SLX1_C"/>
</dbReference>
<dbReference type="InterPro" id="IPR050381">
    <property type="entry name" value="SLX1_endonuclease"/>
</dbReference>
<dbReference type="InterPro" id="IPR001841">
    <property type="entry name" value="Znf_RING"/>
</dbReference>
<dbReference type="InterPro" id="IPR013083">
    <property type="entry name" value="Znf_RING/FYVE/PHD"/>
</dbReference>
<dbReference type="PANTHER" id="PTHR20208">
    <property type="entry name" value="STRUCTURE-SPECIFIC ENDONUCLEASE SUBUNIT SLX1"/>
    <property type="match status" value="1"/>
</dbReference>
<dbReference type="PANTHER" id="PTHR20208:SF10">
    <property type="entry name" value="STRUCTURE-SPECIFIC ENDONUCLEASE SUBUNIT SLX1"/>
    <property type="match status" value="1"/>
</dbReference>
<dbReference type="Pfam" id="PF01541">
    <property type="entry name" value="GIY-YIG"/>
    <property type="match status" value="1"/>
</dbReference>
<dbReference type="Pfam" id="PF21202">
    <property type="entry name" value="SLX1_C"/>
    <property type="match status" value="1"/>
</dbReference>
<dbReference type="SUPFAM" id="SSF82771">
    <property type="entry name" value="GIY-YIG endonuclease"/>
    <property type="match status" value="1"/>
</dbReference>
<dbReference type="PROSITE" id="PS50164">
    <property type="entry name" value="GIY_YIG"/>
    <property type="match status" value="1"/>
</dbReference>
<comment type="function">
    <text evidence="1">Catalytic subunit of the SLX1-SLX4 structure-specific endonuclease that resolves DNA secondary structures generated during DNA repair and recombination. Has endonuclease activity towards branched DNA substrates, introducing single-strand cuts in duplex DNA close to junctions with ss-DNA.</text>
</comment>
<comment type="cofactor">
    <cofactor evidence="1">
        <name>a divalent metal cation</name>
        <dbReference type="ChEBI" id="CHEBI:60240"/>
    </cofactor>
</comment>
<comment type="subunit">
    <text evidence="1">Forms a heterodimer with SLX4.</text>
</comment>
<comment type="subcellular location">
    <subcellularLocation>
        <location evidence="1">Nucleus</location>
    </subcellularLocation>
</comment>
<comment type="similarity">
    <text evidence="1">Belongs to the SLX1 family.</text>
</comment>
<feature type="chain" id="PRO_0000383786" description="Structure-specific endonuclease subunit SLX1">
    <location>
        <begin position="1"/>
        <end position="443"/>
    </location>
</feature>
<feature type="domain" description="GIY-YIG" evidence="1">
    <location>
        <begin position="13"/>
        <end position="93"/>
    </location>
</feature>
<feature type="zinc finger region" description="SLX1-type" evidence="1">
    <location>
        <begin position="361"/>
        <end position="419"/>
    </location>
</feature>
<feature type="region of interest" description="Disordered" evidence="2">
    <location>
        <begin position="121"/>
        <end position="140"/>
    </location>
</feature>
<keyword id="KW-0227">DNA damage</keyword>
<keyword id="KW-0233">DNA recombination</keyword>
<keyword id="KW-0234">DNA repair</keyword>
<keyword id="KW-0255">Endonuclease</keyword>
<keyword id="KW-0378">Hydrolase</keyword>
<keyword id="KW-0479">Metal-binding</keyword>
<keyword id="KW-0540">Nuclease</keyword>
<keyword id="KW-0539">Nucleus</keyword>
<keyword id="KW-1185">Reference proteome</keyword>
<keyword id="KW-0862">Zinc</keyword>
<keyword id="KW-0863">Zinc-finger</keyword>
<protein>
    <recommendedName>
        <fullName evidence="1">Structure-specific endonuclease subunit SLX1</fullName>
        <ecNumber evidence="1">3.1.-.-</ecNumber>
    </recommendedName>
</protein>
<accession>A8PWH1</accession>
<name>SLX1_MALGO</name>
<organism>
    <name type="scientific">Malassezia globosa (strain ATCC MYA-4612 / CBS 7966)</name>
    <name type="common">Dandruff-associated fungus</name>
    <dbReference type="NCBI Taxonomy" id="425265"/>
    <lineage>
        <taxon>Eukaryota</taxon>
        <taxon>Fungi</taxon>
        <taxon>Dikarya</taxon>
        <taxon>Basidiomycota</taxon>
        <taxon>Ustilaginomycotina</taxon>
        <taxon>Malasseziomycetes</taxon>
        <taxon>Malasseziales</taxon>
        <taxon>Malasseziaceae</taxon>
        <taxon>Malassezia</taxon>
    </lineage>
</organism>
<evidence type="ECO:0000255" key="1">
    <source>
        <dbReference type="HAMAP-Rule" id="MF_03100"/>
    </source>
</evidence>
<evidence type="ECO:0000256" key="2">
    <source>
        <dbReference type="SAM" id="MobiDB-lite"/>
    </source>
</evidence>